<feature type="chain" id="PRO_0000087626" description="U2-ctenitoxin-Pk1a" evidence="2">
    <location>
        <begin position="1"/>
        <end position="50"/>
    </location>
</feature>
<feature type="disulfide bond" evidence="3">
    <location>
        <begin position="1"/>
        <end position="15"/>
    </location>
</feature>
<feature type="disulfide bond" evidence="3">
    <location>
        <begin position="8"/>
        <end position="21"/>
    </location>
</feature>
<feature type="disulfide bond" evidence="3">
    <location>
        <begin position="12"/>
        <end position="47"/>
    </location>
</feature>
<feature type="disulfide bond" evidence="3">
    <location>
        <begin position="14"/>
        <end position="31"/>
    </location>
</feature>
<feature type="disulfide bond" evidence="3">
    <location>
        <begin position="23"/>
        <end position="29"/>
    </location>
</feature>
<organism>
    <name type="scientific">Phoneutria keyserlingi</name>
    <name type="common">Brazilian wandering spider</name>
    <name type="synonym">Ctenus keyserlingii</name>
    <dbReference type="NCBI Taxonomy" id="272754"/>
    <lineage>
        <taxon>Eukaryota</taxon>
        <taxon>Metazoa</taxon>
        <taxon>Ecdysozoa</taxon>
        <taxon>Arthropoda</taxon>
        <taxon>Chelicerata</taxon>
        <taxon>Arachnida</taxon>
        <taxon>Araneae</taxon>
        <taxon>Araneomorphae</taxon>
        <taxon>Entelegynae</taxon>
        <taxon>Lycosoidea</taxon>
        <taxon>Ctenidae</taxon>
        <taxon>Phoneutria</taxon>
    </lineage>
</organism>
<sequence length="50" mass="5584">CGDINAPCQSDCDCCGYSVTCDCYWSKDCKCRESNFVIGMALRKAFCKNK</sequence>
<proteinExistence type="evidence at protein level"/>
<protein>
    <recommendedName>
        <fullName evidence="3">U2-ctenitoxin-Pk1a</fullName>
        <shortName evidence="3">U2-CNTX-Pk1a</shortName>
    </recommendedName>
    <alternativeName>
        <fullName>Neurotoxin PKTx20C2</fullName>
    </alternativeName>
</protein>
<comment type="function">
    <text evidence="1">Insecticidal neurotoxin that reversibly inhibits the N-methyl-D-aspartate (NMDA)-subtype of ionotropic glutamate receptor (GRIN) and inhibits inactivation of insect sodium channels (Nav). In vivo, is highly toxic to insects.</text>
</comment>
<comment type="subcellular location">
    <subcellularLocation>
        <location evidence="2">Secreted</location>
    </subcellularLocation>
</comment>
<comment type="tissue specificity">
    <text evidence="4">Expressed by the venom gland.</text>
</comment>
<comment type="domain">
    <text evidence="3">The presence of a 'disulfide through disulfide knot' structurally defines this protein as a knottin.</text>
</comment>
<comment type="mass spectrometry" mass="5493.0" method="Electrospray" evidence="2"/>
<comment type="similarity">
    <text evidence="3">Belongs to the neurotoxin 03 (Tx2) family. 05 subfamily.</text>
</comment>
<reference key="1">
    <citation type="journal article" date="2006" name="Comp. Biochem. Physiol.">
        <title>Comparison of the partial proteomes of the venoms of Brazilian spiders of the genus Phoneutria.</title>
        <authorList>
            <person name="Richardson M."/>
            <person name="Pimenta A.M."/>
            <person name="Bemquerer M.P."/>
            <person name="Santoro M.M."/>
            <person name="Beirao P.S."/>
            <person name="Lima M.E."/>
            <person name="Figueiredo S.G."/>
            <person name="Bloch C. Jr."/>
            <person name="Vasconcelos E.A."/>
            <person name="Campos F.A."/>
            <person name="Gomes P.C."/>
            <person name="Cordeiro M.N."/>
        </authorList>
    </citation>
    <scope>PROTEIN SEQUENCE</scope>
    <scope>SUBCELLULAR LOCATION</scope>
    <scope>MASS SPECTROMETRY</scope>
    <source>
        <tissue>Venom</tissue>
    </source>
</reference>
<name>TX35A_PHOKE</name>
<accession>P83905</accession>
<evidence type="ECO:0000250" key="1">
    <source>
        <dbReference type="UniProtKB" id="P59367"/>
    </source>
</evidence>
<evidence type="ECO:0000269" key="2">
    <source>
    </source>
</evidence>
<evidence type="ECO:0000305" key="3"/>
<evidence type="ECO:0000305" key="4">
    <source>
    </source>
</evidence>
<dbReference type="SMR" id="P83905"/>
<dbReference type="ArachnoServer" id="AS000230">
    <property type="toxin name" value="U2-ctenitoxin-Pk1a"/>
</dbReference>
<dbReference type="GO" id="GO:0005576">
    <property type="term" value="C:extracellular region"/>
    <property type="evidence" value="ECO:0007669"/>
    <property type="project" value="UniProtKB-SubCell"/>
</dbReference>
<dbReference type="GO" id="GO:0035792">
    <property type="term" value="C:host cell postsynaptic membrane"/>
    <property type="evidence" value="ECO:0007669"/>
    <property type="project" value="UniProtKB-KW"/>
</dbReference>
<dbReference type="GO" id="GO:0017080">
    <property type="term" value="F:sodium channel regulator activity"/>
    <property type="evidence" value="ECO:0007669"/>
    <property type="project" value="UniProtKB-KW"/>
</dbReference>
<dbReference type="GO" id="GO:0090729">
    <property type="term" value="F:toxin activity"/>
    <property type="evidence" value="ECO:0007669"/>
    <property type="project" value="UniProtKB-KW"/>
</dbReference>
<dbReference type="InterPro" id="IPR035285">
    <property type="entry name" value="CNTX"/>
</dbReference>
<dbReference type="Pfam" id="PF17492">
    <property type="entry name" value="D_CNTX"/>
    <property type="match status" value="1"/>
</dbReference>
<keyword id="KW-0903">Direct protein sequencing</keyword>
<keyword id="KW-1015">Disulfide bond</keyword>
<keyword id="KW-0872">Ion channel impairing toxin</keyword>
<keyword id="KW-1028">Ionotropic glutamate receptor inhibitor</keyword>
<keyword id="KW-0960">Knottin</keyword>
<keyword id="KW-0528">Neurotoxin</keyword>
<keyword id="KW-0629">Postsynaptic neurotoxin</keyword>
<keyword id="KW-0964">Secreted</keyword>
<keyword id="KW-0800">Toxin</keyword>
<keyword id="KW-0738">Voltage-gated sodium channel impairing toxin</keyword>